<comment type="function">
    <text evidence="1">Catalyzes the formation of 6,7-dimethyl-8-ribityllumazine by condensation of 5-amino-6-(D-ribitylamino)uracil with 3,4-dihydroxy-2-butanone 4-phosphate. This is the penultimate step in the biosynthesis of riboflavin.</text>
</comment>
<comment type="catalytic activity">
    <reaction evidence="1">
        <text>(2S)-2-hydroxy-3-oxobutyl phosphate + 5-amino-6-(D-ribitylamino)uracil = 6,7-dimethyl-8-(1-D-ribityl)lumazine + phosphate + 2 H2O + H(+)</text>
        <dbReference type="Rhea" id="RHEA:26152"/>
        <dbReference type="ChEBI" id="CHEBI:15377"/>
        <dbReference type="ChEBI" id="CHEBI:15378"/>
        <dbReference type="ChEBI" id="CHEBI:15934"/>
        <dbReference type="ChEBI" id="CHEBI:43474"/>
        <dbReference type="ChEBI" id="CHEBI:58201"/>
        <dbReference type="ChEBI" id="CHEBI:58830"/>
        <dbReference type="EC" id="2.5.1.78"/>
    </reaction>
</comment>
<comment type="pathway">
    <text evidence="1">Cofactor biosynthesis; riboflavin biosynthesis; riboflavin from 2-hydroxy-3-oxobutyl phosphate and 5-amino-6-(D-ribitylamino)uracil: step 1/2.</text>
</comment>
<comment type="similarity">
    <text evidence="1">Belongs to the DMRL synthase family.</text>
</comment>
<evidence type="ECO:0000255" key="1">
    <source>
        <dbReference type="HAMAP-Rule" id="MF_00178"/>
    </source>
</evidence>
<name>RISB_CAMJR</name>
<keyword id="KW-0686">Riboflavin biosynthesis</keyword>
<keyword id="KW-0808">Transferase</keyword>
<organism>
    <name type="scientific">Campylobacter jejuni (strain RM1221)</name>
    <dbReference type="NCBI Taxonomy" id="195099"/>
    <lineage>
        <taxon>Bacteria</taxon>
        <taxon>Pseudomonadati</taxon>
        <taxon>Campylobacterota</taxon>
        <taxon>Epsilonproteobacteria</taxon>
        <taxon>Campylobacterales</taxon>
        <taxon>Campylobacteraceae</taxon>
        <taxon>Campylobacter</taxon>
    </lineage>
</organism>
<sequence>MNIIEGKLNLDSNTKIAIINARFNHIITDRLVEGAKDAFLRHGGKEENLSLILVPGAFELPYALKKAIESKKFDAICCVGAVIRGSTPHFDYVSAETTKGIANVSLNHNIPVSFGVLTTDTIEQAIERAGSKAGNKGFEAMTTVIEMLNLSKEL</sequence>
<gene>
    <name evidence="1" type="primary">ribH</name>
    <name type="ordered locus">CJE0432</name>
</gene>
<dbReference type="EC" id="2.5.1.78" evidence="1"/>
<dbReference type="EMBL" id="CP000025">
    <property type="protein sequence ID" value="AAW35021.1"/>
    <property type="molecule type" value="Genomic_DNA"/>
</dbReference>
<dbReference type="SMR" id="Q5HW84"/>
<dbReference type="KEGG" id="cjr:CJE0432"/>
<dbReference type="HOGENOM" id="CLU_089358_1_1_7"/>
<dbReference type="UniPathway" id="UPA00275">
    <property type="reaction ID" value="UER00404"/>
</dbReference>
<dbReference type="GO" id="GO:0005829">
    <property type="term" value="C:cytosol"/>
    <property type="evidence" value="ECO:0007669"/>
    <property type="project" value="TreeGrafter"/>
</dbReference>
<dbReference type="GO" id="GO:0009349">
    <property type="term" value="C:riboflavin synthase complex"/>
    <property type="evidence" value="ECO:0007669"/>
    <property type="project" value="InterPro"/>
</dbReference>
<dbReference type="GO" id="GO:0000906">
    <property type="term" value="F:6,7-dimethyl-8-ribityllumazine synthase activity"/>
    <property type="evidence" value="ECO:0007669"/>
    <property type="project" value="UniProtKB-UniRule"/>
</dbReference>
<dbReference type="GO" id="GO:0009231">
    <property type="term" value="P:riboflavin biosynthetic process"/>
    <property type="evidence" value="ECO:0007669"/>
    <property type="project" value="UniProtKB-UniRule"/>
</dbReference>
<dbReference type="CDD" id="cd09209">
    <property type="entry name" value="Lumazine_synthase-I"/>
    <property type="match status" value="1"/>
</dbReference>
<dbReference type="FunFam" id="3.40.50.960:FF:000001">
    <property type="entry name" value="6,7-dimethyl-8-ribityllumazine synthase"/>
    <property type="match status" value="1"/>
</dbReference>
<dbReference type="Gene3D" id="3.40.50.960">
    <property type="entry name" value="Lumazine/riboflavin synthase"/>
    <property type="match status" value="1"/>
</dbReference>
<dbReference type="HAMAP" id="MF_00178">
    <property type="entry name" value="Lumazine_synth"/>
    <property type="match status" value="1"/>
</dbReference>
<dbReference type="InterPro" id="IPR034964">
    <property type="entry name" value="LS"/>
</dbReference>
<dbReference type="InterPro" id="IPR002180">
    <property type="entry name" value="LS/RS"/>
</dbReference>
<dbReference type="InterPro" id="IPR036467">
    <property type="entry name" value="LS/RS_sf"/>
</dbReference>
<dbReference type="NCBIfam" id="TIGR00114">
    <property type="entry name" value="lumazine-synth"/>
    <property type="match status" value="1"/>
</dbReference>
<dbReference type="NCBIfam" id="NF000812">
    <property type="entry name" value="PRK00061.1-4"/>
    <property type="match status" value="1"/>
</dbReference>
<dbReference type="PANTHER" id="PTHR21058:SF0">
    <property type="entry name" value="6,7-DIMETHYL-8-RIBITYLLUMAZINE SYNTHASE"/>
    <property type="match status" value="1"/>
</dbReference>
<dbReference type="PANTHER" id="PTHR21058">
    <property type="entry name" value="6,7-DIMETHYL-8-RIBITYLLUMAZINE SYNTHASE DMRL SYNTHASE LUMAZINE SYNTHASE"/>
    <property type="match status" value="1"/>
</dbReference>
<dbReference type="Pfam" id="PF00885">
    <property type="entry name" value="DMRL_synthase"/>
    <property type="match status" value="1"/>
</dbReference>
<dbReference type="SUPFAM" id="SSF52121">
    <property type="entry name" value="Lumazine synthase"/>
    <property type="match status" value="1"/>
</dbReference>
<protein>
    <recommendedName>
        <fullName evidence="1">6,7-dimethyl-8-ribityllumazine synthase</fullName>
        <shortName evidence="1">DMRL synthase</shortName>
        <shortName evidence="1">LS</shortName>
        <shortName evidence="1">Lumazine synthase</shortName>
        <ecNumber evidence="1">2.5.1.78</ecNumber>
    </recommendedName>
</protein>
<accession>Q5HW84</accession>
<proteinExistence type="inferred from homology"/>
<feature type="chain" id="PRO_1000040393" description="6,7-dimethyl-8-ribityllumazine synthase">
    <location>
        <begin position="1"/>
        <end position="154"/>
    </location>
</feature>
<feature type="active site" description="Proton donor" evidence="1">
    <location>
        <position position="89"/>
    </location>
</feature>
<feature type="binding site" evidence="1">
    <location>
        <position position="23"/>
    </location>
    <ligand>
        <name>5-amino-6-(D-ribitylamino)uracil</name>
        <dbReference type="ChEBI" id="CHEBI:15934"/>
    </ligand>
</feature>
<feature type="binding site" evidence="1">
    <location>
        <begin position="57"/>
        <end position="59"/>
    </location>
    <ligand>
        <name>5-amino-6-(D-ribitylamino)uracil</name>
        <dbReference type="ChEBI" id="CHEBI:15934"/>
    </ligand>
</feature>
<feature type="binding site" evidence="1">
    <location>
        <begin position="81"/>
        <end position="83"/>
    </location>
    <ligand>
        <name>5-amino-6-(D-ribitylamino)uracil</name>
        <dbReference type="ChEBI" id="CHEBI:15934"/>
    </ligand>
</feature>
<feature type="binding site" evidence="1">
    <location>
        <begin position="86"/>
        <end position="87"/>
    </location>
    <ligand>
        <name>(2S)-2-hydroxy-3-oxobutyl phosphate</name>
        <dbReference type="ChEBI" id="CHEBI:58830"/>
    </ligand>
</feature>
<feature type="binding site" evidence="1">
    <location>
        <position position="114"/>
    </location>
    <ligand>
        <name>5-amino-6-(D-ribitylamino)uracil</name>
        <dbReference type="ChEBI" id="CHEBI:15934"/>
    </ligand>
</feature>
<feature type="binding site" evidence="1">
    <location>
        <position position="128"/>
    </location>
    <ligand>
        <name>(2S)-2-hydroxy-3-oxobutyl phosphate</name>
        <dbReference type="ChEBI" id="CHEBI:58830"/>
    </ligand>
</feature>
<reference key="1">
    <citation type="journal article" date="2005" name="PLoS Biol.">
        <title>Major structural differences and novel potential virulence mechanisms from the genomes of multiple Campylobacter species.</title>
        <authorList>
            <person name="Fouts D.E."/>
            <person name="Mongodin E.F."/>
            <person name="Mandrell R.E."/>
            <person name="Miller W.G."/>
            <person name="Rasko D.A."/>
            <person name="Ravel J."/>
            <person name="Brinkac L.M."/>
            <person name="DeBoy R.T."/>
            <person name="Parker C.T."/>
            <person name="Daugherty S.C."/>
            <person name="Dodson R.J."/>
            <person name="Durkin A.S."/>
            <person name="Madupu R."/>
            <person name="Sullivan S.A."/>
            <person name="Shetty J.U."/>
            <person name="Ayodeji M.A."/>
            <person name="Shvartsbeyn A."/>
            <person name="Schatz M.C."/>
            <person name="Badger J.H."/>
            <person name="Fraser C.M."/>
            <person name="Nelson K.E."/>
        </authorList>
    </citation>
    <scope>NUCLEOTIDE SEQUENCE [LARGE SCALE GENOMIC DNA]</scope>
    <source>
        <strain>RM1221</strain>
    </source>
</reference>